<proteinExistence type="predicted"/>
<sequence length="73" mass="8304">MIPQSVINFKIECCFFVKIEDESLNKLLNLTKLSFINAPVIPLLTINTLPPNLEILELTLGKHKVLIIVFQKV</sequence>
<reference key="1">
    <citation type="journal article" date="2005" name="Nature">
        <title>The genome of the social amoeba Dictyostelium discoideum.</title>
        <authorList>
            <person name="Eichinger L."/>
            <person name="Pachebat J.A."/>
            <person name="Gloeckner G."/>
            <person name="Rajandream M.A."/>
            <person name="Sucgang R."/>
            <person name="Berriman M."/>
            <person name="Song J."/>
            <person name="Olsen R."/>
            <person name="Szafranski K."/>
            <person name="Xu Q."/>
            <person name="Tunggal B."/>
            <person name="Kummerfeld S."/>
            <person name="Madera M."/>
            <person name="Konfortov B.A."/>
            <person name="Rivero F."/>
            <person name="Bankier A.T."/>
            <person name="Lehmann R."/>
            <person name="Hamlin N."/>
            <person name="Davies R."/>
            <person name="Gaudet P."/>
            <person name="Fey P."/>
            <person name="Pilcher K."/>
            <person name="Chen G."/>
            <person name="Saunders D."/>
            <person name="Sodergren E.J."/>
            <person name="Davis P."/>
            <person name="Kerhornou A."/>
            <person name="Nie X."/>
            <person name="Hall N."/>
            <person name="Anjard C."/>
            <person name="Hemphill L."/>
            <person name="Bason N."/>
            <person name="Farbrother P."/>
            <person name="Desany B."/>
            <person name="Just E."/>
            <person name="Morio T."/>
            <person name="Rost R."/>
            <person name="Churcher C.M."/>
            <person name="Cooper J."/>
            <person name="Haydock S."/>
            <person name="van Driessche N."/>
            <person name="Cronin A."/>
            <person name="Goodhead I."/>
            <person name="Muzny D.M."/>
            <person name="Mourier T."/>
            <person name="Pain A."/>
            <person name="Lu M."/>
            <person name="Harper D."/>
            <person name="Lindsay R."/>
            <person name="Hauser H."/>
            <person name="James K.D."/>
            <person name="Quiles M."/>
            <person name="Madan Babu M."/>
            <person name="Saito T."/>
            <person name="Buchrieser C."/>
            <person name="Wardroper A."/>
            <person name="Felder M."/>
            <person name="Thangavelu M."/>
            <person name="Johnson D."/>
            <person name="Knights A."/>
            <person name="Loulseged H."/>
            <person name="Mungall K.L."/>
            <person name="Oliver K."/>
            <person name="Price C."/>
            <person name="Quail M.A."/>
            <person name="Urushihara H."/>
            <person name="Hernandez J."/>
            <person name="Rabbinowitsch E."/>
            <person name="Steffen D."/>
            <person name="Sanders M."/>
            <person name="Ma J."/>
            <person name="Kohara Y."/>
            <person name="Sharp S."/>
            <person name="Simmonds M.N."/>
            <person name="Spiegler S."/>
            <person name="Tivey A."/>
            <person name="Sugano S."/>
            <person name="White B."/>
            <person name="Walker D."/>
            <person name="Woodward J.R."/>
            <person name="Winckler T."/>
            <person name="Tanaka Y."/>
            <person name="Shaulsky G."/>
            <person name="Schleicher M."/>
            <person name="Weinstock G.M."/>
            <person name="Rosenthal A."/>
            <person name="Cox E.C."/>
            <person name="Chisholm R.L."/>
            <person name="Gibbs R.A."/>
            <person name="Loomis W.F."/>
            <person name="Platzer M."/>
            <person name="Kay R.R."/>
            <person name="Williams J.G."/>
            <person name="Dear P.H."/>
            <person name="Noegel A.A."/>
            <person name="Barrell B.G."/>
            <person name="Kuspa A."/>
        </authorList>
    </citation>
    <scope>NUCLEOTIDE SEQUENCE [LARGE SCALE GENOMIC DNA]</scope>
    <source>
        <strain>AX4</strain>
    </source>
</reference>
<dbReference type="EMBL" id="AAFI02000130">
    <property type="protein sequence ID" value="EAL62894.1"/>
    <property type="molecule type" value="Genomic_DNA"/>
</dbReference>
<dbReference type="RefSeq" id="XP_636397.1">
    <property type="nucleotide sequence ID" value="XM_631305.1"/>
</dbReference>
<dbReference type="SMR" id="Q54I08"/>
<dbReference type="PaxDb" id="44689-DDB0188252"/>
<dbReference type="EnsemblProtists" id="EAL62894">
    <property type="protein sequence ID" value="EAL62894"/>
    <property type="gene ID" value="DDB_G0289089"/>
</dbReference>
<dbReference type="GeneID" id="8626956"/>
<dbReference type="KEGG" id="ddi:DDB_G0289089"/>
<dbReference type="dictyBase" id="DDB_G0289089"/>
<dbReference type="HOGENOM" id="CLU_2710024_0_0_1"/>
<dbReference type="InParanoid" id="Q54I08"/>
<dbReference type="PRO" id="PR:Q54I08"/>
<dbReference type="Proteomes" id="UP000002195">
    <property type="component" value="Chromosome 5"/>
</dbReference>
<gene>
    <name type="ORF">DDB_G0289089</name>
</gene>
<name>Y8252_DICDI</name>
<feature type="chain" id="PRO_0000346961" description="Putative uncharacterized protein DDB_G0289089">
    <location>
        <begin position="1"/>
        <end position="73"/>
    </location>
</feature>
<accession>Q54I08</accession>
<protein>
    <recommendedName>
        <fullName>Putative uncharacterized protein DDB_G0289089</fullName>
    </recommendedName>
</protein>
<keyword id="KW-1185">Reference proteome</keyword>
<organism>
    <name type="scientific">Dictyostelium discoideum</name>
    <name type="common">Social amoeba</name>
    <dbReference type="NCBI Taxonomy" id="44689"/>
    <lineage>
        <taxon>Eukaryota</taxon>
        <taxon>Amoebozoa</taxon>
        <taxon>Evosea</taxon>
        <taxon>Eumycetozoa</taxon>
        <taxon>Dictyostelia</taxon>
        <taxon>Dictyosteliales</taxon>
        <taxon>Dictyosteliaceae</taxon>
        <taxon>Dictyostelium</taxon>
    </lineage>
</organism>